<evidence type="ECO:0000255" key="1">
    <source>
        <dbReference type="PROSITE-ProRule" id="PRU00316"/>
    </source>
</evidence>
<evidence type="ECO:0000256" key="2">
    <source>
        <dbReference type="SAM" id="MobiDB-lite"/>
    </source>
</evidence>
<evidence type="ECO:0000269" key="3">
    <source>
    </source>
</evidence>
<evidence type="ECO:0000269" key="4">
    <source>
    </source>
</evidence>
<evidence type="ECO:0000305" key="5"/>
<comment type="function">
    <text evidence="3 4">May act as a positive modulator of hmr-1 function during epidermal morphogenesis (PubMed:12847081). Required for proper localization of other junctional components, such as pac-1 (PubMed:25938815).</text>
</comment>
<comment type="subunit">
    <text evidence="3 4">Associated with the catenin-cadherin complex consisting of hmr-1, hmp-1 and hmp-2 (PubMed:25938815). Interacts with hmr-1 (PubMed:12847081, PubMed:25938815). Interacts with picc-1 (PubMed:25938815).</text>
</comment>
<comment type="interaction">
    <interactant intactId="EBI-2917356">
        <id>Q9U308</id>
    </interactant>
    <interactant intactId="EBI-2528888">
        <id>Q967F4</id>
        <label>hmr-1</label>
    </interactant>
    <organismsDiffer>false</organismsDiffer>
    <experiments>3</experiments>
</comment>
<comment type="interaction">
    <interactant intactId="EBI-2917356">
        <id>Q9U308</id>
    </interactant>
    <interactant intactId="EBI-315998">
        <id>H2KYP0</id>
        <label>picc-1</label>
    </interactant>
    <organismsDiffer>false</organismsDiffer>
    <experiments>3</experiments>
</comment>
<comment type="subcellular location">
    <subcellularLocation>
        <location evidence="3 4">Cell junction</location>
        <location evidence="3 4">Adherens junction</location>
    </subcellularLocation>
    <subcellularLocation>
        <location evidence="4">Nucleus</location>
    </subcellularLocation>
</comment>
<comment type="alternative products">
    <event type="alternative splicing"/>
    <isoform>
        <id>Q9U308-1</id>
        <name>a</name>
        <sequence type="displayed"/>
    </isoform>
    <isoform>
        <id>Q9U308-2</id>
        <name>b</name>
        <sequence type="described" ref="VSP_021980"/>
    </isoform>
</comment>
<comment type="tissue specificity">
    <text evidence="3">Epidermal cells.</text>
</comment>
<comment type="developmental stage">
    <text evidence="3">Expressed in the early epidermis.</text>
</comment>
<comment type="disruption phenotype">
    <text evidence="4">Embryos are viable, but display a partial loss of junctional component, pac-1, from adherens junctions.</text>
</comment>
<comment type="similarity">
    <text evidence="5">Belongs to the beta-catenin family.</text>
</comment>
<reference key="1">
    <citation type="journal article" date="1998" name="Science">
        <title>Genome sequence of the nematode C. elegans: a platform for investigating biology.</title>
        <authorList>
            <consortium name="The C. elegans sequencing consortium"/>
        </authorList>
    </citation>
    <scope>NUCLEOTIDE SEQUENCE [LARGE SCALE GENOMIC DNA]</scope>
    <scope>ALTERNATIVE SPLICING</scope>
    <source>
        <strain>Bristol N2</strain>
    </source>
</reference>
<reference key="2">
    <citation type="journal article" date="2001" name="Genetics">
        <title>The divergent Caenorhabditis elegans beta-catenin proteins BAR-1, WRM-1 and HMP-2 make distinct protein interactions but retain functional redundancy in vivo.</title>
        <authorList>
            <person name="Natarajan L."/>
            <person name="Witwer N.E."/>
            <person name="Eisenmann D.M."/>
        </authorList>
    </citation>
    <scope>IDENTIFICATION</scope>
</reference>
<reference key="3">
    <citation type="journal article" date="2003" name="J. Cell Biol.">
        <title>The Caenorhabditis elegans p120 catenin homologue, JAC-1, modulates cadherin-catenin function during epidermal morphogenesis.</title>
        <authorList>
            <person name="Pettitt J."/>
            <person name="Cox E.A."/>
            <person name="Broadbent I.D."/>
            <person name="Flett A."/>
            <person name="Hardin J."/>
        </authorList>
    </citation>
    <scope>IDENTIFICATION</scope>
    <scope>FUNCTION</scope>
    <scope>INTERACTION WITH HMR-1</scope>
    <scope>SUBCELLULAR LOCATION</scope>
    <scope>ALTERNATIVE SPLICING</scope>
    <scope>TISSUE SPECIFICITY</scope>
    <scope>DEVELOPMENTAL STAGE</scope>
</reference>
<reference key="4">
    <citation type="journal article" date="2015" name="Nat. Cell Biol.">
        <title>An instructive role for C. elegans E-cadherin in translating cell contact cues into cortical polarity.</title>
        <authorList>
            <person name="Klompstra D."/>
            <person name="Anderson D.C."/>
            <person name="Yeh J.Y."/>
            <person name="Zilberman Y."/>
            <person name="Nance J."/>
        </authorList>
    </citation>
    <scope>FUNCTION</scope>
    <scope>ASSOCIATION WITH THE CATENIN-CADHERIN COMPLEX</scope>
    <scope>INTERACTION WITH PICC-1 AND HMR-1</scope>
    <scope>SUBCELLULAR LOCATION</scope>
    <scope>DISRUPTION PHENOTYPE</scope>
</reference>
<organism>
    <name type="scientific">Caenorhabditis elegans</name>
    <dbReference type="NCBI Taxonomy" id="6239"/>
    <lineage>
        <taxon>Eukaryota</taxon>
        <taxon>Metazoa</taxon>
        <taxon>Ecdysozoa</taxon>
        <taxon>Nematoda</taxon>
        <taxon>Chromadorea</taxon>
        <taxon>Rhabditida</taxon>
        <taxon>Rhabditina</taxon>
        <taxon>Rhabditomorpha</taxon>
        <taxon>Rhabditoidea</taxon>
        <taxon>Rhabditidae</taxon>
        <taxon>Peloderinae</taxon>
        <taxon>Caenorhabditis</taxon>
    </lineage>
</organism>
<protein>
    <recommendedName>
        <fullName>Juxtamembrane domain-associated catenin</fullName>
    </recommendedName>
    <alternativeName>
        <fullName>p120 catenin homolog</fullName>
    </alternativeName>
</protein>
<accession>Q9U308</accession>
<accession>Q2HQL5</accession>
<proteinExistence type="evidence at protein level"/>
<feature type="chain" id="PRO_0000268649" description="Juxtamembrane domain-associated catenin">
    <location>
        <begin position="1"/>
        <end position="1254"/>
    </location>
</feature>
<feature type="domain" description="Fibronectin type-III 1" evidence="1">
    <location>
        <begin position="207"/>
        <end position="302"/>
    </location>
</feature>
<feature type="domain" description="Fibronectin type-III 2" evidence="1">
    <location>
        <begin position="315"/>
        <end position="411"/>
    </location>
</feature>
<feature type="domain" description="Fibronectin type-III 3" evidence="1">
    <location>
        <begin position="428"/>
        <end position="518"/>
    </location>
</feature>
<feature type="domain" description="Fibronectin type-III 4" evidence="1">
    <location>
        <begin position="530"/>
        <end position="624"/>
    </location>
</feature>
<feature type="repeat" description="ARM 1">
    <location>
        <begin position="733"/>
        <end position="775"/>
    </location>
</feature>
<feature type="repeat" description="ARM 2">
    <location>
        <begin position="777"/>
        <end position="820"/>
    </location>
</feature>
<feature type="repeat" description="ARM 3">
    <location>
        <begin position="874"/>
        <end position="922"/>
    </location>
</feature>
<feature type="repeat" description="ARM 4">
    <location>
        <begin position="969"/>
        <end position="1012"/>
    </location>
</feature>
<feature type="repeat" description="ARM 5">
    <location>
        <begin position="1016"/>
        <end position="1058"/>
    </location>
</feature>
<feature type="region of interest" description="Disordered" evidence="2">
    <location>
        <begin position="1"/>
        <end position="38"/>
    </location>
</feature>
<feature type="region of interest" description="Disordered" evidence="2">
    <location>
        <begin position="84"/>
        <end position="106"/>
    </location>
</feature>
<feature type="region of interest" description="Disordered" evidence="2">
    <location>
        <begin position="145"/>
        <end position="209"/>
    </location>
</feature>
<feature type="region of interest" description="Disordered" evidence="2">
    <location>
        <begin position="412"/>
        <end position="433"/>
    </location>
</feature>
<feature type="region of interest" description="Disordered" evidence="2">
    <location>
        <begin position="662"/>
        <end position="685"/>
    </location>
</feature>
<feature type="region of interest" description="Disordered" evidence="2">
    <location>
        <begin position="920"/>
        <end position="960"/>
    </location>
</feature>
<feature type="region of interest" description="Disordered" evidence="2">
    <location>
        <begin position="1159"/>
        <end position="1254"/>
    </location>
</feature>
<feature type="compositionally biased region" description="Acidic residues" evidence="2">
    <location>
        <begin position="12"/>
        <end position="22"/>
    </location>
</feature>
<feature type="compositionally biased region" description="Polar residues" evidence="2">
    <location>
        <begin position="145"/>
        <end position="157"/>
    </location>
</feature>
<feature type="compositionally biased region" description="Polar residues" evidence="2">
    <location>
        <begin position="1166"/>
        <end position="1176"/>
    </location>
</feature>
<feature type="compositionally biased region" description="Basic and acidic residues" evidence="2">
    <location>
        <begin position="1177"/>
        <end position="1187"/>
    </location>
</feature>
<feature type="splice variant" id="VSP_021980" description="In isoform b." evidence="5">
    <location>
        <begin position="1"/>
        <end position="170"/>
    </location>
</feature>
<gene>
    <name type="primary">jac-1</name>
    <name type="ORF">Y105C5B.21</name>
</gene>
<keyword id="KW-0025">Alternative splicing</keyword>
<keyword id="KW-0130">Cell adhesion</keyword>
<keyword id="KW-0965">Cell junction</keyword>
<keyword id="KW-0539">Nucleus</keyword>
<keyword id="KW-1185">Reference proteome</keyword>
<keyword id="KW-0677">Repeat</keyword>
<dbReference type="EMBL" id="AL110479">
    <property type="protein sequence ID" value="CAJ76966.1"/>
    <property type="molecule type" value="Genomic_DNA"/>
</dbReference>
<dbReference type="EMBL" id="AL110479">
    <property type="protein sequence ID" value="CAB60320.2"/>
    <property type="molecule type" value="Genomic_DNA"/>
</dbReference>
<dbReference type="RefSeq" id="NP_001041007.1">
    <molecule id="Q9U308-1"/>
    <property type="nucleotide sequence ID" value="NM_001047542.3"/>
</dbReference>
<dbReference type="RefSeq" id="NP_001041008.1">
    <molecule id="Q9U308-2"/>
    <property type="nucleotide sequence ID" value="NM_001047543.4"/>
</dbReference>
<dbReference type="SMR" id="Q9U308"/>
<dbReference type="BioGRID" id="43529">
    <property type="interactions" value="24"/>
</dbReference>
<dbReference type="DIP" id="DIP-61637N"/>
<dbReference type="FunCoup" id="Q9U308">
    <property type="interactions" value="79"/>
</dbReference>
<dbReference type="IntAct" id="Q9U308">
    <property type="interactions" value="21"/>
</dbReference>
<dbReference type="STRING" id="6239.Y105C5B.21e.1"/>
<dbReference type="iPTMnet" id="Q9U308"/>
<dbReference type="PaxDb" id="6239-Y105C5B.21a"/>
<dbReference type="PeptideAtlas" id="Q9U308"/>
<dbReference type="EnsemblMetazoa" id="Y105C5B.21a.1">
    <molecule id="Q9U308-1"/>
    <property type="protein sequence ID" value="Y105C5B.21a.1"/>
    <property type="gene ID" value="WBGene00002175"/>
</dbReference>
<dbReference type="EnsemblMetazoa" id="Y105C5B.21b.1">
    <molecule id="Q9U308-2"/>
    <property type="protein sequence ID" value="Y105C5B.21b.1"/>
    <property type="gene ID" value="WBGene00002175"/>
</dbReference>
<dbReference type="GeneID" id="178451"/>
<dbReference type="KEGG" id="cel:CELE_Y105C5B.21"/>
<dbReference type="UCSC" id="Y105C5B.21b.1">
    <molecule id="Q9U308-1"/>
    <property type="organism name" value="c. elegans"/>
</dbReference>
<dbReference type="AGR" id="WB:WBGene00002175"/>
<dbReference type="CTD" id="178451"/>
<dbReference type="WormBase" id="Y105C5B.21a">
    <molecule id="Q9U308-1"/>
    <property type="protein sequence ID" value="CE32231"/>
    <property type="gene ID" value="WBGene00002175"/>
    <property type="gene designation" value="jac-1"/>
</dbReference>
<dbReference type="WormBase" id="Y105C5B.21b">
    <molecule id="Q9U308-2"/>
    <property type="protein sequence ID" value="CE39806"/>
    <property type="gene ID" value="WBGene00002175"/>
    <property type="gene designation" value="jac-1"/>
</dbReference>
<dbReference type="eggNOG" id="KOG1048">
    <property type="taxonomic scope" value="Eukaryota"/>
</dbReference>
<dbReference type="GeneTree" id="ENSGT00940000166712"/>
<dbReference type="InParanoid" id="Q9U308"/>
<dbReference type="OrthoDB" id="3245100at2759"/>
<dbReference type="Reactome" id="R-CEL-351906">
    <property type="pathway name" value="Apoptotic cleavage of cell adhesion proteins"/>
</dbReference>
<dbReference type="Reactome" id="R-CEL-5218920">
    <property type="pathway name" value="VEGFR2 mediated vascular permeability"/>
</dbReference>
<dbReference type="Reactome" id="R-CEL-6798695">
    <property type="pathway name" value="Neutrophil degranulation"/>
</dbReference>
<dbReference type="Reactome" id="R-CEL-6809371">
    <property type="pathway name" value="Formation of the cornified envelope"/>
</dbReference>
<dbReference type="SignaLink" id="Q9U308"/>
<dbReference type="PRO" id="PR:Q9U308"/>
<dbReference type="Proteomes" id="UP000001940">
    <property type="component" value="Chromosome IV"/>
</dbReference>
<dbReference type="Bgee" id="WBGene00002175">
    <property type="expression patterns" value="Expressed in pharyngeal muscle cell (C elegans) and 3 other cell types or tissues"/>
</dbReference>
<dbReference type="ExpressionAtlas" id="Q9U308">
    <property type="expression patterns" value="baseline and differential"/>
</dbReference>
<dbReference type="GO" id="GO:0005912">
    <property type="term" value="C:adherens junction"/>
    <property type="evidence" value="ECO:0000314"/>
    <property type="project" value="WormBase"/>
</dbReference>
<dbReference type="GO" id="GO:0016342">
    <property type="term" value="C:catenin complex"/>
    <property type="evidence" value="ECO:0000314"/>
    <property type="project" value="WormBase"/>
</dbReference>
<dbReference type="GO" id="GO:0005737">
    <property type="term" value="C:cytoplasm"/>
    <property type="evidence" value="ECO:0000318"/>
    <property type="project" value="GO_Central"/>
</dbReference>
<dbReference type="GO" id="GO:0005634">
    <property type="term" value="C:nucleus"/>
    <property type="evidence" value="ECO:0000318"/>
    <property type="project" value="GO_Central"/>
</dbReference>
<dbReference type="GO" id="GO:0005886">
    <property type="term" value="C:plasma membrane"/>
    <property type="evidence" value="ECO:0000318"/>
    <property type="project" value="GO_Central"/>
</dbReference>
<dbReference type="GO" id="GO:0045296">
    <property type="term" value="F:cadherin binding"/>
    <property type="evidence" value="ECO:0000353"/>
    <property type="project" value="WormBase"/>
</dbReference>
<dbReference type="GO" id="GO:0098609">
    <property type="term" value="P:cell-cell adhesion"/>
    <property type="evidence" value="ECO:0000318"/>
    <property type="project" value="GO_Central"/>
</dbReference>
<dbReference type="GO" id="GO:0010172">
    <property type="term" value="P:embryonic body morphogenesis"/>
    <property type="evidence" value="ECO:0000316"/>
    <property type="project" value="WormBase"/>
</dbReference>
<dbReference type="GO" id="GO:0032956">
    <property type="term" value="P:regulation of actin cytoskeleton organization"/>
    <property type="evidence" value="ECO:0000316"/>
    <property type="project" value="WormBase"/>
</dbReference>
<dbReference type="GO" id="GO:0032880">
    <property type="term" value="P:regulation of protein localization"/>
    <property type="evidence" value="ECO:0000316"/>
    <property type="project" value="WormBase"/>
</dbReference>
<dbReference type="CDD" id="cd00063">
    <property type="entry name" value="FN3"/>
    <property type="match status" value="4"/>
</dbReference>
<dbReference type="FunFam" id="2.60.40.10:FF:000504">
    <property type="entry name" value="Bent, isoform J"/>
    <property type="match status" value="1"/>
</dbReference>
<dbReference type="FunFam" id="1.25.10.10:FF:000458">
    <property type="entry name" value="Juxtamembrane domain-associated catenin"/>
    <property type="match status" value="1"/>
</dbReference>
<dbReference type="Gene3D" id="2.60.40.10">
    <property type="entry name" value="Immunoglobulins"/>
    <property type="match status" value="4"/>
</dbReference>
<dbReference type="Gene3D" id="1.25.10.10">
    <property type="entry name" value="Leucine-rich Repeat Variant"/>
    <property type="match status" value="1"/>
</dbReference>
<dbReference type="InterPro" id="IPR011989">
    <property type="entry name" value="ARM-like"/>
</dbReference>
<dbReference type="InterPro" id="IPR016024">
    <property type="entry name" value="ARM-type_fold"/>
</dbReference>
<dbReference type="InterPro" id="IPR000225">
    <property type="entry name" value="Armadillo"/>
</dbReference>
<dbReference type="InterPro" id="IPR003961">
    <property type="entry name" value="FN3_dom"/>
</dbReference>
<dbReference type="InterPro" id="IPR036116">
    <property type="entry name" value="FN3_sf"/>
</dbReference>
<dbReference type="InterPro" id="IPR013783">
    <property type="entry name" value="Ig-like_fold"/>
</dbReference>
<dbReference type="InterPro" id="IPR028435">
    <property type="entry name" value="Plakophilin/d_Catenin"/>
</dbReference>
<dbReference type="PANTHER" id="PTHR10372:SF27">
    <property type="entry name" value="ADHERENS JUNCTION PROTEIN P120"/>
    <property type="match status" value="1"/>
</dbReference>
<dbReference type="PANTHER" id="PTHR10372">
    <property type="entry name" value="PLAKOPHILLIN-RELATED"/>
    <property type="match status" value="1"/>
</dbReference>
<dbReference type="Pfam" id="PF00514">
    <property type="entry name" value="Arm"/>
    <property type="match status" value="3"/>
</dbReference>
<dbReference type="Pfam" id="PF00041">
    <property type="entry name" value="fn3"/>
    <property type="match status" value="3"/>
</dbReference>
<dbReference type="SMART" id="SM00185">
    <property type="entry name" value="ARM"/>
    <property type="match status" value="5"/>
</dbReference>
<dbReference type="SMART" id="SM00060">
    <property type="entry name" value="FN3"/>
    <property type="match status" value="4"/>
</dbReference>
<dbReference type="SUPFAM" id="SSF48371">
    <property type="entry name" value="ARM repeat"/>
    <property type="match status" value="1"/>
</dbReference>
<dbReference type="SUPFAM" id="SSF49265">
    <property type="entry name" value="Fibronectin type III"/>
    <property type="match status" value="2"/>
</dbReference>
<dbReference type="PROSITE" id="PS50176">
    <property type="entry name" value="ARM_REPEAT"/>
    <property type="match status" value="2"/>
</dbReference>
<dbReference type="PROSITE" id="PS50853">
    <property type="entry name" value="FN3"/>
    <property type="match status" value="4"/>
</dbReference>
<name>JAC1_CAEEL</name>
<sequence length="1254" mass="138358">MISSGWMQEMEPIPEEGTEADGSEWGAMSDTAKRTMRKKEVYTSEQINTLVSTVPKEAVPQEWLVENQVVDPEMATSYLTESLAGPTSARGSSYSYSYESHYDNPPEEEYEHFTNDDGVHQMQKVTRVTKVTTTRSVRQVPVQSPYSNIDFDSSGLPTPSPVIDRDPSLEMMARMGGASDHDSEDRSAPPPAPASRFLHEDSGIPSAPGVPDVVDAGIGEVTVVWSAPLQSNGGEVRGYQIEMREFPDGEWESMGVDHLLKDTTCRVTNLTSHEVQFRVSAYGRTGFGPASNPSLPVKIPISETDLATSAGAPLAPGRPTVIAVDGQGVLLEWTPPVADVHSSPPQGYQVEYRVYGSRDWIVANEQLVQENVFTVESLRPNGVYEFRVRGKNQDGLGHPSMSSGGVAIRPAAPQRHVPARKVSESVQPPGQPQMVEVGDDVVKLEWAPSVQNARYIVEYREVGDPEWHTANYDPIVQNGIQVEGLHRNSTYEFCVISIVDNIASQPSETSDIIHLRPTCNTSALRPAPNILEAPEFLEVDGDKITICWLPAQSQLPVMGYDVEFRDLQQDDRWYKVNDQPVFACKMTVGDLIMDHDYQFRVLAHNASGCSQPSPPSDFVHIEPSTNRFSSDTMESPHLGHHDVVKYVEAERFGAVPLLQEEMVRESPPLPERDDSPPPLRRANNNVQWRDPSLKEVIEYLSSADKDKQLNASGYLQHLTYTDNQIKEETREYGGIPKLIALLRSDTPRIQKNACACLKNLSFGKENDANKLAVMEADGVRLIAEVLRTTHDASVKEEAAAALWNLSSADMLKPVILESATEILSQQVIAPVLAVGTSDPTRHFGSTLFKNSTGVLRNVSAASQQARRRLRDIPNLIEALVHFLTHAIQKSQVDSPTVENAVCLLRNLSYRIQEVVDPNYDPAAAHSSSSKNMKHVASPKPEKKKKDKEKKKDKNPKNIVTGPSVLWQPHVVKLYLKLLQDSSNIETLEASAGAIQNLAACQFPPSAEVRAAVRVEKGLPVLVELIRLPEDFVVCAVATALRNLAIDPRNRELIGKYALRDFLDKLPEPGSPRRSAISDQTIGAVLGILFEIVRSSAAYTKDVHELKGTDKLRALSRSYPTYSHRVCKYASQVLYVMWQHKELHDGFKRSGLKEADFYSGTARRGDSSTLARPISSQGRERPSMHQLDETLSSGGGYGTMESNNRAGTLRPASATSQTIQRRYDQVPRDGPVYSSVQKPSPRGGGGGGNIDDSWV</sequence>